<comment type="function">
    <text evidence="4">Toxic component of a toxin-immunity protein module, which functions as a cellular contact-dependent growth inhibition (CDI) system. A site-specific tRNA(Glu) nuclease, the C-terminus (residues 2214-2346) probably removes 2 or 4 nucleotides from the 3' end of tRNA(Glu) but not tRNA2(Arg) or tRNA3(Ser) (upon expression in E.coli), possibly endonucleolytically. The nuclease activity is neutralized by expression of the cognate immunity protein WapI from the same strain, but not its homolog from 2 other B.subtilis strains. The C-terminus cannot be expressed on its own in E.coli, however it can be cloned in the presence of its cognate immunity protein gene wapI. Cell contact is probably necessary for growth inhibition.</text>
</comment>
<comment type="subcellular location">
    <subcellularLocation>
        <location evidence="1">Secreted</location>
        <location evidence="1">Cell wall</location>
    </subcellularLocation>
    <text evidence="1">Released into the medium.</text>
</comment>
<comment type="similarity">
    <text evidence="5">Belongs to the RHS/WapA nuclease family.</text>
</comment>
<reference key="1">
    <citation type="journal article" date="2010" name="BMC Genomics">
        <title>Whole genome assembly of a natto production strain Bacillus subtilis natto from very short read data.</title>
        <authorList>
            <person name="Nishito Y."/>
            <person name="Osana Y."/>
            <person name="Hachiya T."/>
            <person name="Popendorf K."/>
            <person name="Toyoda A."/>
            <person name="Fujiyama A."/>
            <person name="Itaya M."/>
            <person name="Sakakibara Y."/>
        </authorList>
    </citation>
    <scope>NUCLEOTIDE SEQUENCE [LARGE SCALE GENOMIC DNA]</scope>
    <source>
        <strain>BEST195</strain>
    </source>
</reference>
<reference key="2">
    <citation type="journal article" date="2014" name="PLoS ONE">
        <title>Whole genome complete resequencing of Bacillus subtilis natto by combining long reads with high-quality short reads.</title>
        <authorList>
            <person name="Kamada M."/>
            <person name="Hase S."/>
            <person name="Sato K."/>
            <person name="Toyoda A."/>
            <person name="Fujiyama A."/>
            <person name="Sakakibara Y."/>
        </authorList>
    </citation>
    <scope>GENOME REANNOTATION</scope>
    <source>
        <strain>BEST195</strain>
    </source>
</reference>
<reference key="3">
    <citation type="journal article" date="2013" name="Proc. Natl. Acad. Sci. U.S.A.">
        <title>Rhs proteins from diverse bacteria mediate intercellular competition.</title>
        <authorList>
            <person name="Koskiniemi S."/>
            <person name="Lamoureux J.G."/>
            <person name="Nikolakakis K.C."/>
            <person name="t'Kint de Roodenbeke C."/>
            <person name="Kaplan M.D."/>
            <person name="Low D.A."/>
            <person name="Hayes C.S."/>
        </authorList>
    </citation>
    <scope>FUNCTION AS A TRNA NUCLEASE</scope>
    <scope>FUNCTION AS A TOXIN</scope>
    <scope>EXPRESSION IN E.COLI</scope>
    <source>
        <strain>BEST195</strain>
    </source>
</reference>
<sequence>MSEYYFYYKRREKMKKRKRRNFKRFIAAFLVLALIISLVPADVLAKTTEEENGNRIVADDPEETLQKEQTEEAVPFDPKDINKEGEITSERTENTKLYYEGDGVYKQEVYLDPIHTKETPDADWEDISPELKESTSKQVETENAILNSDFQKQMKNGLYATFEHNDHKVTYSLVEAKAPNKTSLTPKDTSADYKTDSNEIVYPDVFPNIDLQTFTFNENIKEDLVLHQYDGYNTFTFQLKTDLQAKEQEDGSIDFSDEKGKVVFSVPKPFMTDSKLDELSGEVERSDKVSYKLEKNEEGYLLHLTADENWLKDPERVYPVSIDPSTSLSVSSDTFVMSAYPTTNYSASSQKWDANLKAYVLKTGYYDKTTGTNYAFMKFNNLKPIQNMTVTKATLKTYVAHSYYGTKATGLWLDTVNSNYDNAKVTWNTKPASKNIGKADVHKGQWASYDVTAAVKSWNSGGANYGFKLHTNGNGKEYWKKLISSANSANKPYIEVTYTIPKGNTPTIKAYHNGDSTGYFDISWKKVEGAKGYKVWIYNGKEYQAISAGNVTSWSTKGKKIWPTSAEIASKRYKLHLDGKDGAELALDPSPVYKNSGGSYATSKNYWIGVSAIFDQGEGAMSAPAKPVIPNVGKAQAPSAKGYNNGNATGYFDLSWKAVSGATGYKVQVFNGKGFETLDLGNQTSWTTKGKKIWPTSAEIKAGKYALHLKDGSGAELPINPGPTYKNAGGDGAKKNYSFKIIAYNKDGEAIASPAANPALPDIARPKNLTGYLYTNTKSSQTGYVNLIWEKVQNAKGYKVNIYNGKEYQSFDVGDADHWTTQNKNIWPTSEEIKAGSYKLHTDGKGGELALDPSPVYNNANGNYKGKKNYSFTLVAYDANGETIPTAPFNPTFHEGAEFLGTEEYWSIIDIPSGQLNGATGNVIVNEEDLSIDGRGPGLGLSRTYNSLDSSDHLFGQGWYADAETSVISTDGGAMYIDEDATTHRFTKKADGTYQPPTGVYLELTETADQFILKTKDQTNAYFNKKGGKLQKVVDGHNNATVYTYNDKNQLTAITDASGRKLTFTYDENGHVTSITGPKNKKVTYSYENDLLKKVTDTDGTVTSYDYDGEGRLVKQYSANSTEAKPVFTEYQYSGHRLEKAINAKKETYVYSYDADKKTLLMTQPNGRKVQYGYNEAGNPIQVIDDAEGLKITTNTKYEGNNVVEDVDPNDVGTGKATESYQYDKDGNVTSVKDAYGTETYEYNKNNDVTKMKDTEGNVTDIAYDGLDAVSETDQSGKSSSAAVYDKYGNQIQSSKDLSASTNILKDGSFEAQKSGWNLTASKDSGKISIITDKSGVLSGSKALEILSQSTSAGTDHGFSSATQTVELEPNTTYTLSGKIKTDLAKTRAYFNIDLRDKDQKRIQWIHNEYSALAGKNDWTKRQITFTTPANAGKAVVYMEVDHNDKDGKGKAWFDEVQLEKGEVSSSYNPVQNSSFTSATENWNVSGASVDSEEGFNDDVSLKAARTSASQAGSVTKQTVVLGQSANDKPVYLTLTGMSKASSVKFTDEKDYSLQANVTYADGSTGVYNAKFPSGTQEWNRAAVVIPKTKPINKVDISILFQKSATGTVWFDDIRLIEGSLLTKSTYDSNGNYVTKEEDELGYATSTDYDETGKKTAETDAKGEKTTYTYDQADQLTNMTLSNGTSILHSYDKEGNEVSKTIRAGADQTYKYEYDVMGKLVKTTDPLGNVLASEYDANSNLTKTISPNGNEVSLSYDGTDRVKSKSYNGTEKYNFTYDKNGNETSVVNKEQNTTKKRTFDNKNRLTELTDRGGSQTWTYPSDSDKLKTFSWTHGDQKGTNQFTYNKLDQMIEMKDSTSSYSFDYDENGNVQTFITGNGGGTSFSYDERNLVSSLHIGDKNGGSILTESYEYDANGNRTTINSSASGKVKYEYGKLNQLVKETHEDGTVIEYTYDGFGNRKTVTTVKDGSSKTVNASFNIMNQLTKVNDESISYDKNGNRTSDGKFTYTWDAEDNLTAVTKKGEDKPFATYKYDEKGNRIQKTVNGKVTNYFYDGDSLNVLYETDADNNVTKSYTYGDSGQLLSYTENGKKYFYHYNAHGDVIAISDSTGKTVAKYQYDAWGNPTKTEASDEVKDNRYRYAGYQYDEETGLYYLMARYYEPRNGVFLSLDPDPGSDGDSLDQNGYTYGNNNPVMNVDPDGHWVWFVVNAGFAVYDGYKAYKSGKGWKGVAVAAASGFVGGGKLKLTKKIGKWATSRHWYKGTFKTKRKSLDYHHNKHIVRNGKSYSKKRYTKVARAFYRSNKHLREKVILATGKKGYRIKNGKRTGYYTRSGKVVTFVNNKWKKKKKR</sequence>
<proteinExistence type="evidence at protein level"/>
<keyword id="KW-0134">Cell wall</keyword>
<keyword id="KW-0255">Endonuclease</keyword>
<keyword id="KW-0378">Hydrolase</keyword>
<keyword id="KW-0540">Nuclease</keyword>
<keyword id="KW-0677">Repeat</keyword>
<keyword id="KW-0964">Secreted</keyword>
<keyword id="KW-0732">Signal</keyword>
<keyword id="KW-0800">Toxin</keyword>
<keyword id="KW-0843">Virulence</keyword>
<evidence type="ECO:0000250" key="1"/>
<evidence type="ECO:0000255" key="2"/>
<evidence type="ECO:0000256" key="3">
    <source>
        <dbReference type="SAM" id="MobiDB-lite"/>
    </source>
</evidence>
<evidence type="ECO:0000269" key="4">
    <source>
    </source>
</evidence>
<evidence type="ECO:0000305" key="5"/>
<feature type="signal peptide" evidence="2">
    <location>
        <begin position="1"/>
        <end position="45"/>
    </location>
</feature>
<feature type="chain" id="PRO_0000423975" description="tRNA(Glu)-specific nuclease WapA">
    <location>
        <begin position="46"/>
        <end position="2347"/>
    </location>
</feature>
<feature type="repeat" description="YD 1">
    <location>
        <begin position="1045"/>
        <end position="1078"/>
    </location>
</feature>
<feature type="repeat" description="YD 2">
    <location>
        <begin position="1088"/>
        <end position="1116"/>
    </location>
</feature>
<feature type="repeat" description="YD 3">
    <location>
        <begin position="1649"/>
        <end position="1684"/>
    </location>
</feature>
<feature type="repeat" description="YD 4">
    <location>
        <begin position="1691"/>
        <end position="1729"/>
    </location>
</feature>
<feature type="repeat" description="YD 5">
    <location>
        <begin position="2095"/>
        <end position="2126"/>
    </location>
</feature>
<feature type="region of interest" description="Disordered" evidence="3">
    <location>
        <begin position="50"/>
        <end position="72"/>
    </location>
</feature>
<name>WAPA_BACNB</name>
<accession>D4G3R4</accession>
<protein>
    <recommendedName>
        <fullName>tRNA(Glu)-specific nuclease WapA</fullName>
        <ecNumber>3.1.-.-</ecNumber>
    </recommendedName>
    <alternativeName>
        <fullName>Cell wall-associated protein</fullName>
    </alternativeName>
    <alternativeName>
        <fullName>RNase WapA</fullName>
    </alternativeName>
    <alternativeName>
        <fullName>Toxin WapA</fullName>
    </alternativeName>
</protein>
<dbReference type="EC" id="3.1.-.-"/>
<dbReference type="EMBL" id="AP011541">
    <property type="protein sequence ID" value="BAI87617.2"/>
    <property type="molecule type" value="Genomic_DNA"/>
</dbReference>
<dbReference type="SMR" id="D4G3R4"/>
<dbReference type="STRING" id="86029.AWV81_20955"/>
<dbReference type="KEGG" id="bso:BSNT_10605"/>
<dbReference type="HOGENOM" id="CLU_001086_0_0_9"/>
<dbReference type="GO" id="GO:0005576">
    <property type="term" value="C:extracellular region"/>
    <property type="evidence" value="ECO:0007669"/>
    <property type="project" value="UniProtKB-KW"/>
</dbReference>
<dbReference type="GO" id="GO:0004519">
    <property type="term" value="F:endonuclease activity"/>
    <property type="evidence" value="ECO:0007669"/>
    <property type="project" value="UniProtKB-KW"/>
</dbReference>
<dbReference type="GO" id="GO:0016798">
    <property type="term" value="F:hydrolase activity, acting on glycosyl bonds"/>
    <property type="evidence" value="ECO:0007669"/>
    <property type="project" value="InterPro"/>
</dbReference>
<dbReference type="GO" id="GO:0090729">
    <property type="term" value="F:toxin activity"/>
    <property type="evidence" value="ECO:0007669"/>
    <property type="project" value="UniProtKB-KW"/>
</dbReference>
<dbReference type="GO" id="GO:0004549">
    <property type="term" value="F:tRNA-specific ribonuclease activity"/>
    <property type="evidence" value="ECO:0000314"/>
    <property type="project" value="UniProtKB"/>
</dbReference>
<dbReference type="GO" id="GO:0016078">
    <property type="term" value="P:tRNA decay"/>
    <property type="evidence" value="ECO:0000314"/>
    <property type="project" value="UniProtKB"/>
</dbReference>
<dbReference type="FunFam" id="2.180.10.10:FF:000010">
    <property type="entry name" value="Cell wall-associated protein"/>
    <property type="match status" value="1"/>
</dbReference>
<dbReference type="FunFam" id="2.180.10.10:FF:000015">
    <property type="entry name" value="Cell wall-associated protein"/>
    <property type="match status" value="1"/>
</dbReference>
<dbReference type="Gene3D" id="2.60.120.970">
    <property type="match status" value="1"/>
</dbReference>
<dbReference type="Gene3D" id="2.60.120.260">
    <property type="entry name" value="Galactose-binding domain-like"/>
    <property type="match status" value="2"/>
</dbReference>
<dbReference type="Gene3D" id="2.60.40.10">
    <property type="entry name" value="Immunoglobulins"/>
    <property type="match status" value="1"/>
</dbReference>
<dbReference type="Gene3D" id="2.180.10.10">
    <property type="entry name" value="RHS repeat-associated core"/>
    <property type="match status" value="1"/>
</dbReference>
<dbReference type="InterPro" id="IPR055372">
    <property type="entry name" value="CBM96"/>
</dbReference>
<dbReference type="InterPro" id="IPR003305">
    <property type="entry name" value="CenC_carb-bd"/>
</dbReference>
<dbReference type="InterPro" id="IPR045351">
    <property type="entry name" value="DUF6531"/>
</dbReference>
<dbReference type="InterPro" id="IPR008979">
    <property type="entry name" value="Galactose-bd-like_sf"/>
</dbReference>
<dbReference type="InterPro" id="IPR013783">
    <property type="entry name" value="Ig-like_fold"/>
</dbReference>
<dbReference type="InterPro" id="IPR022385">
    <property type="entry name" value="Rhs_assc_core"/>
</dbReference>
<dbReference type="InterPro" id="IPR031325">
    <property type="entry name" value="RHS_repeat"/>
</dbReference>
<dbReference type="InterPro" id="IPR050708">
    <property type="entry name" value="T6SS_VgrG/RHS"/>
</dbReference>
<dbReference type="InterPro" id="IPR006530">
    <property type="entry name" value="YD"/>
</dbReference>
<dbReference type="NCBIfam" id="NF033679">
    <property type="entry name" value="DNRLRE_dom"/>
    <property type="match status" value="1"/>
</dbReference>
<dbReference type="NCBIfam" id="TIGR03696">
    <property type="entry name" value="Rhs_assc_core"/>
    <property type="match status" value="1"/>
</dbReference>
<dbReference type="NCBIfam" id="TIGR01643">
    <property type="entry name" value="YD_repeat_2x"/>
    <property type="match status" value="5"/>
</dbReference>
<dbReference type="PANTHER" id="PTHR32305">
    <property type="match status" value="1"/>
</dbReference>
<dbReference type="PANTHER" id="PTHR32305:SF17">
    <property type="entry name" value="TRNA NUCLEASE WAPA"/>
    <property type="match status" value="1"/>
</dbReference>
<dbReference type="Pfam" id="PF24517">
    <property type="entry name" value="CBM96"/>
    <property type="match status" value="1"/>
</dbReference>
<dbReference type="Pfam" id="PF02018">
    <property type="entry name" value="CBM_4_9"/>
    <property type="match status" value="1"/>
</dbReference>
<dbReference type="Pfam" id="PF20148">
    <property type="entry name" value="DUF6531"/>
    <property type="match status" value="1"/>
</dbReference>
<dbReference type="Pfam" id="PF05593">
    <property type="entry name" value="RHS_repeat"/>
    <property type="match status" value="7"/>
</dbReference>
<dbReference type="SUPFAM" id="SSF49785">
    <property type="entry name" value="Galactose-binding domain-like"/>
    <property type="match status" value="1"/>
</dbReference>
<organism>
    <name type="scientific">Bacillus subtilis subsp. natto (strain BEST195)</name>
    <dbReference type="NCBI Taxonomy" id="645657"/>
    <lineage>
        <taxon>Bacteria</taxon>
        <taxon>Bacillati</taxon>
        <taxon>Bacillota</taxon>
        <taxon>Bacilli</taxon>
        <taxon>Bacillales</taxon>
        <taxon>Bacillaceae</taxon>
        <taxon>Bacillus</taxon>
    </lineage>
</organism>
<gene>
    <name type="primary">wapA</name>
    <name type="ORF">BSNT_10605</name>
</gene>